<protein>
    <recommendedName>
        <fullName>Neurotoxin Bot2</fullName>
    </recommendedName>
    <alternativeName>
        <fullName>Bot II</fullName>
        <shortName>BotII</shortName>
    </alternativeName>
    <alternativeName>
        <fullName evidence="4">Neurotoxin II</fullName>
    </alternativeName>
</protein>
<organism>
    <name type="scientific">Buthus occitanus tunetanus</name>
    <name type="common">Common European scorpion</name>
    <name type="synonym">Buthus tunetanus</name>
    <dbReference type="NCBI Taxonomy" id="6871"/>
    <lineage>
        <taxon>Eukaryota</taxon>
        <taxon>Metazoa</taxon>
        <taxon>Ecdysozoa</taxon>
        <taxon>Arthropoda</taxon>
        <taxon>Chelicerata</taxon>
        <taxon>Arachnida</taxon>
        <taxon>Scorpiones</taxon>
        <taxon>Buthida</taxon>
        <taxon>Buthoidea</taxon>
        <taxon>Buthidae</taxon>
        <taxon>Buthus</taxon>
    </lineage>
</organism>
<reference key="1">
    <citation type="journal article" date="1982" name="Toxicon">
        <title>Neurotoxins from the venoms of two scorpions: Buthus occitanus tunetanus and Buthus occitanus mardochei.</title>
        <authorList>
            <person name="Vargas O."/>
            <person name="Gregoire J."/>
            <person name="Martin M.-F."/>
            <person name="Bechis G."/>
            <person name="Rochat H."/>
        </authorList>
    </citation>
    <scope>PROTEIN SEQUENCE</scope>
    <scope>SUBCELLULAR LOCATION</scope>
    <source>
        <tissue>Venom</tissue>
    </source>
</reference>
<reference key="2">
    <citation type="journal article" date="1983" name="Toxicon">
        <title>Covalent structure of toxins I and II from the scorpion Buthus occitanus tunetanus.</title>
        <authorList>
            <person name="Gregoire J."/>
            <person name="Rochat H."/>
        </authorList>
    </citation>
    <scope>PROTEIN SEQUENCE</scope>
    <scope>SUBCELLULAR LOCATION</scope>
    <scope>AMIDATION AT PHE-65</scope>
    <scope>DISULFIDE BOND</scope>
    <source>
        <tissue>Venom</tissue>
    </source>
</reference>
<sequence>GRDAYIAQPENCVYECAKNSYCNDLCTKNGAKSGYCQWLGRWGNACYCIDLPDKVPIRIEGKCHF</sequence>
<comment type="function">
    <text>Binds to sodium channels (Nav) and inhibits the inactivation of the activated channels, thereby blocking neuronal transmission.</text>
</comment>
<comment type="subcellular location">
    <subcellularLocation>
        <location evidence="3">Secreted</location>
    </subcellularLocation>
</comment>
<comment type="tissue specificity">
    <text evidence="6">Expressed by the venom gland.</text>
</comment>
<comment type="domain">
    <text evidence="5">Has the structural arrangement of an alpha-helix connected to antiparallel beta-sheets by disulfide bonds (CS-alpha/beta).</text>
</comment>
<comment type="similarity">
    <text evidence="5">Belongs to the long (4 C-C) scorpion toxin superfamily. Sodium channel inhibitor family. Alpha subfamily.</text>
</comment>
<proteinExistence type="evidence at protein level"/>
<dbReference type="PIR" id="A01743">
    <property type="entry name" value="NTSR2B"/>
</dbReference>
<dbReference type="SMR" id="P01483"/>
<dbReference type="GO" id="GO:0005576">
    <property type="term" value="C:extracellular region"/>
    <property type="evidence" value="ECO:0007669"/>
    <property type="project" value="UniProtKB-SubCell"/>
</dbReference>
<dbReference type="GO" id="GO:0019871">
    <property type="term" value="F:sodium channel inhibitor activity"/>
    <property type="evidence" value="ECO:0007669"/>
    <property type="project" value="InterPro"/>
</dbReference>
<dbReference type="GO" id="GO:0090729">
    <property type="term" value="F:toxin activity"/>
    <property type="evidence" value="ECO:0007669"/>
    <property type="project" value="UniProtKB-KW"/>
</dbReference>
<dbReference type="GO" id="GO:0006952">
    <property type="term" value="P:defense response"/>
    <property type="evidence" value="ECO:0007669"/>
    <property type="project" value="InterPro"/>
</dbReference>
<dbReference type="CDD" id="cd23106">
    <property type="entry name" value="neurotoxins_LC_scorpion"/>
    <property type="match status" value="1"/>
</dbReference>
<dbReference type="FunFam" id="3.30.30.10:FF:000002">
    <property type="entry name" value="Alpha-like toxin BmK-M1"/>
    <property type="match status" value="1"/>
</dbReference>
<dbReference type="Gene3D" id="3.30.30.10">
    <property type="entry name" value="Knottin, scorpion toxin-like"/>
    <property type="match status" value="1"/>
</dbReference>
<dbReference type="InterPro" id="IPR044062">
    <property type="entry name" value="LCN-type_CS_alpha_beta_dom"/>
</dbReference>
<dbReference type="InterPro" id="IPR003614">
    <property type="entry name" value="Scorpion_toxin-like"/>
</dbReference>
<dbReference type="InterPro" id="IPR036574">
    <property type="entry name" value="Scorpion_toxin-like_sf"/>
</dbReference>
<dbReference type="InterPro" id="IPR018218">
    <property type="entry name" value="Scorpion_toxinL"/>
</dbReference>
<dbReference type="InterPro" id="IPR002061">
    <property type="entry name" value="Scorpion_toxinL/defensin"/>
</dbReference>
<dbReference type="Pfam" id="PF00537">
    <property type="entry name" value="Toxin_3"/>
    <property type="match status" value="1"/>
</dbReference>
<dbReference type="PRINTS" id="PR00285">
    <property type="entry name" value="SCORPNTOXIN"/>
</dbReference>
<dbReference type="SMART" id="SM00505">
    <property type="entry name" value="Knot1"/>
    <property type="match status" value="1"/>
</dbReference>
<dbReference type="SUPFAM" id="SSF57095">
    <property type="entry name" value="Scorpion toxin-like"/>
    <property type="match status" value="1"/>
</dbReference>
<dbReference type="PROSITE" id="PS51863">
    <property type="entry name" value="LCN_CSAB"/>
    <property type="match status" value="1"/>
</dbReference>
<evidence type="ECO:0000255" key="1">
    <source>
        <dbReference type="PROSITE-ProRule" id="PRU01210"/>
    </source>
</evidence>
<evidence type="ECO:0000269" key="2">
    <source>
    </source>
</evidence>
<evidence type="ECO:0000269" key="3">
    <source ref="1"/>
</evidence>
<evidence type="ECO:0000303" key="4">
    <source>
    </source>
</evidence>
<evidence type="ECO:0000305" key="5"/>
<evidence type="ECO:0000305" key="6">
    <source ref="1"/>
</evidence>
<accession>P01483</accession>
<keyword id="KW-0027">Amidation</keyword>
<keyword id="KW-0903">Direct protein sequencing</keyword>
<keyword id="KW-1015">Disulfide bond</keyword>
<keyword id="KW-0872">Ion channel impairing toxin</keyword>
<keyword id="KW-0528">Neurotoxin</keyword>
<keyword id="KW-0964">Secreted</keyword>
<keyword id="KW-0800">Toxin</keyword>
<keyword id="KW-0738">Voltage-gated sodium channel impairing toxin</keyword>
<name>SCX2_BUTOC</name>
<feature type="chain" id="PRO_0000066733" description="Neurotoxin Bot2" evidence="2 3">
    <location>
        <begin position="1"/>
        <end position="65"/>
    </location>
</feature>
<feature type="domain" description="LCN-type CS-alpha/beta" evidence="1">
    <location>
        <begin position="2"/>
        <end position="64"/>
    </location>
</feature>
<feature type="modified residue" description="Phenylalanine amide" evidence="2 3">
    <location>
        <position position="65"/>
    </location>
</feature>
<feature type="disulfide bond" evidence="1 2">
    <location>
        <begin position="12"/>
        <end position="63"/>
    </location>
</feature>
<feature type="disulfide bond" evidence="1 2">
    <location>
        <begin position="16"/>
        <end position="36"/>
    </location>
</feature>
<feature type="disulfide bond" evidence="1 2">
    <location>
        <begin position="22"/>
        <end position="46"/>
    </location>
</feature>
<feature type="disulfide bond" evidence="1 2">
    <location>
        <begin position="26"/>
        <end position="48"/>
    </location>
</feature>